<proteinExistence type="inferred from homology"/>
<protein>
    <recommendedName>
        <fullName>Uncharacterized protein L683</fullName>
    </recommendedName>
</protein>
<gene>
    <name type="ordered locus">MIMI_L683</name>
</gene>
<organism>
    <name type="scientific">Acanthamoeba polyphaga mimivirus</name>
    <name type="common">APMV</name>
    <dbReference type="NCBI Taxonomy" id="212035"/>
    <lineage>
        <taxon>Viruses</taxon>
        <taxon>Varidnaviria</taxon>
        <taxon>Bamfordvirae</taxon>
        <taxon>Nucleocytoviricota</taxon>
        <taxon>Megaviricetes</taxon>
        <taxon>Imitervirales</taxon>
        <taxon>Mimiviridae</taxon>
        <taxon>Megamimivirinae</taxon>
        <taxon>Mimivirus</taxon>
        <taxon>Mimivirus bradfordmassiliense</taxon>
    </lineage>
</organism>
<keyword id="KW-0449">Lipoprotein</keyword>
<keyword id="KW-0519">Myristate</keyword>
<keyword id="KW-1185">Reference proteome</keyword>
<sequence length="222" mass="26445">MGSCGNSPSLLWLLLADIINKKKDLVYNFDYLQKIHELEMNYFDFVIEKVRLKDTDNHVKITVEKMLDVLKLLLEYTQDQNYQKEIDSCKKYLTDDNPVNPSDDLTEDMLEDDTSREIYLLEFTYGRNQCQYAYSLIQKVEIELANINTLYSTVRSMFYNTMKYIFSSIDYVEVCPENAFKLMINYYENDRNHIAHSLQRKTIKEVRPSQQAITMWFNFGIY</sequence>
<reference key="1">
    <citation type="journal article" date="2004" name="Science">
        <title>The 1.2-megabase genome sequence of Mimivirus.</title>
        <authorList>
            <person name="Raoult D."/>
            <person name="Audic S."/>
            <person name="Robert C."/>
            <person name="Abergel C."/>
            <person name="Renesto P."/>
            <person name="Ogata H."/>
            <person name="La Scola B."/>
            <person name="Susan M."/>
            <person name="Claverie J.-M."/>
        </authorList>
    </citation>
    <scope>NUCLEOTIDE SEQUENCE [LARGE SCALE GENOMIC DNA]</scope>
    <source>
        <strain>Rowbotham-Bradford</strain>
    </source>
</reference>
<evidence type="ECO:0000255" key="1"/>
<evidence type="ECO:0000305" key="2"/>
<accession>Q5UNU6</accession>
<dbReference type="EMBL" id="AY653733">
    <property type="protein sequence ID" value="AAV50944.1"/>
    <property type="molecule type" value="Genomic_DNA"/>
</dbReference>
<dbReference type="SMR" id="Q5UNU6"/>
<dbReference type="KEGG" id="vg:9925332"/>
<dbReference type="Proteomes" id="UP000001134">
    <property type="component" value="Genome"/>
</dbReference>
<name>YL683_MIMIV</name>
<comment type="similarity">
    <text evidence="2">Belongs to the mimivirus R683/R861 family.</text>
</comment>
<feature type="initiator methionine" description="Removed" evidence="1">
    <location>
        <position position="1"/>
    </location>
</feature>
<feature type="chain" id="PRO_0000071315" description="Uncharacterized protein L683">
    <location>
        <begin position="2"/>
        <end position="222"/>
    </location>
</feature>
<feature type="lipid moiety-binding region" description="N-myristoyl glycine; by host" evidence="1">
    <location>
        <position position="2"/>
    </location>
</feature>
<organismHost>
    <name type="scientific">Acanthamoeba polyphaga</name>
    <name type="common">Amoeba</name>
    <dbReference type="NCBI Taxonomy" id="5757"/>
</organismHost>